<comment type="function">
    <text evidence="1">Involved in the biosynthesis of branched-chain amino acids (BCAA). Catalyzes an alkyl-migration followed by a ketol-acid reduction of (S)-2-acetolactate (S2AL) to yield (R)-2,3-dihydroxy-isovalerate. In the isomerase reaction, S2AL is rearranged via a Mg-dependent methyl migration to produce 3-hydroxy-3-methyl-2-ketobutyrate (HMKB). In the reductase reaction, this 2-ketoacid undergoes a metal-dependent reduction by NADPH to yield (R)-2,3-dihydroxy-isovalerate.</text>
</comment>
<comment type="catalytic activity">
    <reaction evidence="1">
        <text>(2R)-2,3-dihydroxy-3-methylbutanoate + NADP(+) = (2S)-2-acetolactate + NADPH + H(+)</text>
        <dbReference type="Rhea" id="RHEA:22068"/>
        <dbReference type="ChEBI" id="CHEBI:15378"/>
        <dbReference type="ChEBI" id="CHEBI:49072"/>
        <dbReference type="ChEBI" id="CHEBI:57783"/>
        <dbReference type="ChEBI" id="CHEBI:58349"/>
        <dbReference type="ChEBI" id="CHEBI:58476"/>
        <dbReference type="EC" id="1.1.1.86"/>
    </reaction>
</comment>
<comment type="catalytic activity">
    <reaction evidence="1">
        <text>(2R,3R)-2,3-dihydroxy-3-methylpentanoate + NADP(+) = (S)-2-ethyl-2-hydroxy-3-oxobutanoate + NADPH + H(+)</text>
        <dbReference type="Rhea" id="RHEA:13493"/>
        <dbReference type="ChEBI" id="CHEBI:15378"/>
        <dbReference type="ChEBI" id="CHEBI:49256"/>
        <dbReference type="ChEBI" id="CHEBI:49258"/>
        <dbReference type="ChEBI" id="CHEBI:57783"/>
        <dbReference type="ChEBI" id="CHEBI:58349"/>
        <dbReference type="EC" id="1.1.1.86"/>
    </reaction>
</comment>
<comment type="cofactor">
    <cofactor evidence="1">
        <name>Mg(2+)</name>
        <dbReference type="ChEBI" id="CHEBI:18420"/>
    </cofactor>
    <text evidence="1">Binds 2 magnesium ions per subunit.</text>
</comment>
<comment type="pathway">
    <text evidence="1">Amino-acid biosynthesis; L-isoleucine biosynthesis; L-isoleucine from 2-oxobutanoate: step 2/4.</text>
</comment>
<comment type="pathway">
    <text evidence="1">Amino-acid biosynthesis; L-valine biosynthesis; L-valine from pyruvate: step 2/4.</text>
</comment>
<comment type="similarity">
    <text evidence="1">Belongs to the ketol-acid reductoisomerase family.</text>
</comment>
<gene>
    <name evidence="1" type="primary">ilvC</name>
    <name type="ordered locus">BPSL1198</name>
</gene>
<evidence type="ECO:0000255" key="1">
    <source>
        <dbReference type="HAMAP-Rule" id="MF_00435"/>
    </source>
</evidence>
<evidence type="ECO:0000255" key="2">
    <source>
        <dbReference type="PROSITE-ProRule" id="PRU01197"/>
    </source>
</evidence>
<evidence type="ECO:0000255" key="3">
    <source>
        <dbReference type="PROSITE-ProRule" id="PRU01198"/>
    </source>
</evidence>
<name>ILVC_BURPS</name>
<organism>
    <name type="scientific">Burkholderia pseudomallei (strain K96243)</name>
    <dbReference type="NCBI Taxonomy" id="272560"/>
    <lineage>
        <taxon>Bacteria</taxon>
        <taxon>Pseudomonadati</taxon>
        <taxon>Pseudomonadota</taxon>
        <taxon>Betaproteobacteria</taxon>
        <taxon>Burkholderiales</taxon>
        <taxon>Burkholderiaceae</taxon>
        <taxon>Burkholderia</taxon>
        <taxon>pseudomallei group</taxon>
    </lineage>
</organism>
<dbReference type="EC" id="1.1.1.86" evidence="1"/>
<dbReference type="EMBL" id="BX571965">
    <property type="protein sequence ID" value="CAH35193.1"/>
    <property type="molecule type" value="Genomic_DNA"/>
</dbReference>
<dbReference type="RefSeq" id="WP_004185539.1">
    <property type="nucleotide sequence ID" value="NZ_CP009538.1"/>
</dbReference>
<dbReference type="RefSeq" id="YP_107820.1">
    <property type="nucleotide sequence ID" value="NC_006350.1"/>
</dbReference>
<dbReference type="SMR" id="Q63VP6"/>
<dbReference type="STRING" id="272560.BPSL1198"/>
<dbReference type="GeneID" id="93059680"/>
<dbReference type="KEGG" id="bps:BPSL1198"/>
<dbReference type="PATRIC" id="fig|272560.51.peg.329"/>
<dbReference type="eggNOG" id="COG0059">
    <property type="taxonomic scope" value="Bacteria"/>
</dbReference>
<dbReference type="UniPathway" id="UPA00047">
    <property type="reaction ID" value="UER00056"/>
</dbReference>
<dbReference type="UniPathway" id="UPA00049">
    <property type="reaction ID" value="UER00060"/>
</dbReference>
<dbReference type="Proteomes" id="UP000000605">
    <property type="component" value="Chromosome 1"/>
</dbReference>
<dbReference type="GO" id="GO:0005829">
    <property type="term" value="C:cytosol"/>
    <property type="evidence" value="ECO:0007669"/>
    <property type="project" value="TreeGrafter"/>
</dbReference>
<dbReference type="GO" id="GO:0004455">
    <property type="term" value="F:ketol-acid reductoisomerase activity"/>
    <property type="evidence" value="ECO:0007669"/>
    <property type="project" value="UniProtKB-UniRule"/>
</dbReference>
<dbReference type="GO" id="GO:0000287">
    <property type="term" value="F:magnesium ion binding"/>
    <property type="evidence" value="ECO:0007669"/>
    <property type="project" value="UniProtKB-UniRule"/>
</dbReference>
<dbReference type="GO" id="GO:0050661">
    <property type="term" value="F:NADP binding"/>
    <property type="evidence" value="ECO:0007669"/>
    <property type="project" value="InterPro"/>
</dbReference>
<dbReference type="GO" id="GO:0009097">
    <property type="term" value="P:isoleucine biosynthetic process"/>
    <property type="evidence" value="ECO:0007669"/>
    <property type="project" value="UniProtKB-UniRule"/>
</dbReference>
<dbReference type="GO" id="GO:0009099">
    <property type="term" value="P:L-valine biosynthetic process"/>
    <property type="evidence" value="ECO:0007669"/>
    <property type="project" value="UniProtKB-UniRule"/>
</dbReference>
<dbReference type="FunFam" id="3.40.50.720:FF:000023">
    <property type="entry name" value="Ketol-acid reductoisomerase (NADP(+))"/>
    <property type="match status" value="1"/>
</dbReference>
<dbReference type="Gene3D" id="6.10.240.10">
    <property type="match status" value="1"/>
</dbReference>
<dbReference type="Gene3D" id="3.40.50.720">
    <property type="entry name" value="NAD(P)-binding Rossmann-like Domain"/>
    <property type="match status" value="1"/>
</dbReference>
<dbReference type="HAMAP" id="MF_00435">
    <property type="entry name" value="IlvC"/>
    <property type="match status" value="1"/>
</dbReference>
<dbReference type="InterPro" id="IPR008927">
    <property type="entry name" value="6-PGluconate_DH-like_C_sf"/>
</dbReference>
<dbReference type="InterPro" id="IPR013023">
    <property type="entry name" value="KARI"/>
</dbReference>
<dbReference type="InterPro" id="IPR000506">
    <property type="entry name" value="KARI_C"/>
</dbReference>
<dbReference type="InterPro" id="IPR013116">
    <property type="entry name" value="KARI_N"/>
</dbReference>
<dbReference type="InterPro" id="IPR014359">
    <property type="entry name" value="KARI_prok"/>
</dbReference>
<dbReference type="InterPro" id="IPR036291">
    <property type="entry name" value="NAD(P)-bd_dom_sf"/>
</dbReference>
<dbReference type="NCBIfam" id="TIGR00465">
    <property type="entry name" value="ilvC"/>
    <property type="match status" value="1"/>
</dbReference>
<dbReference type="NCBIfam" id="NF004017">
    <property type="entry name" value="PRK05479.1"/>
    <property type="match status" value="1"/>
</dbReference>
<dbReference type="NCBIfam" id="NF009940">
    <property type="entry name" value="PRK13403.1"/>
    <property type="match status" value="1"/>
</dbReference>
<dbReference type="PANTHER" id="PTHR21371">
    <property type="entry name" value="KETOL-ACID REDUCTOISOMERASE, MITOCHONDRIAL"/>
    <property type="match status" value="1"/>
</dbReference>
<dbReference type="PANTHER" id="PTHR21371:SF1">
    <property type="entry name" value="KETOL-ACID REDUCTOISOMERASE, MITOCHONDRIAL"/>
    <property type="match status" value="1"/>
</dbReference>
<dbReference type="Pfam" id="PF01450">
    <property type="entry name" value="KARI_C"/>
    <property type="match status" value="1"/>
</dbReference>
<dbReference type="Pfam" id="PF07991">
    <property type="entry name" value="KARI_N"/>
    <property type="match status" value="1"/>
</dbReference>
<dbReference type="PIRSF" id="PIRSF000116">
    <property type="entry name" value="IlvC_gammaproteo"/>
    <property type="match status" value="1"/>
</dbReference>
<dbReference type="SUPFAM" id="SSF48179">
    <property type="entry name" value="6-phosphogluconate dehydrogenase C-terminal domain-like"/>
    <property type="match status" value="1"/>
</dbReference>
<dbReference type="SUPFAM" id="SSF51735">
    <property type="entry name" value="NAD(P)-binding Rossmann-fold domains"/>
    <property type="match status" value="1"/>
</dbReference>
<dbReference type="PROSITE" id="PS51851">
    <property type="entry name" value="KARI_C"/>
    <property type="match status" value="1"/>
</dbReference>
<dbReference type="PROSITE" id="PS51850">
    <property type="entry name" value="KARI_N"/>
    <property type="match status" value="1"/>
</dbReference>
<accession>Q63VP6</accession>
<sequence length="338" mass="36267">MKVFYDKDADLSLIKGKQVTIIGYGSQGHAHALNLKDSGVNVTVGLRRGGASWSKAENAGLAVKEVAEAVKGADVVMMLLPDEQIAAVYAQEVHANIKEGAALAFAHGFNVHYGQVIPRADLDVIMVAPKAPGHTVRGTYAQGGGVPHLIAVAQDKSGAARDIALSYAAANGGGRAGIIETNFREETETDLFGEQAVLCGGTVELIKAGFETLVEAGYAPEMAYFECLHELKLIVDLIYEGGIANMNYSISNNAEYGEYVTGPRVVTEETKKAMKQCLTDIQTGEYAKSFILENKAGAPTLQSRRRLTAEHQIEQVGSKLRAMMPWIAKNKLVDQSKN</sequence>
<proteinExistence type="inferred from homology"/>
<feature type="chain" id="PRO_0000226166" description="Ketol-acid reductoisomerase (NADP(+))">
    <location>
        <begin position="1"/>
        <end position="338"/>
    </location>
</feature>
<feature type="domain" description="KARI N-terminal Rossmann" evidence="2">
    <location>
        <begin position="1"/>
        <end position="181"/>
    </location>
</feature>
<feature type="domain" description="KARI C-terminal knotted" evidence="3">
    <location>
        <begin position="182"/>
        <end position="327"/>
    </location>
</feature>
<feature type="active site" evidence="1">
    <location>
        <position position="107"/>
    </location>
</feature>
<feature type="binding site" evidence="1">
    <location>
        <begin position="24"/>
        <end position="27"/>
    </location>
    <ligand>
        <name>NADP(+)</name>
        <dbReference type="ChEBI" id="CHEBI:58349"/>
    </ligand>
</feature>
<feature type="binding site" evidence="1">
    <location>
        <position position="47"/>
    </location>
    <ligand>
        <name>NADP(+)</name>
        <dbReference type="ChEBI" id="CHEBI:58349"/>
    </ligand>
</feature>
<feature type="binding site" evidence="1">
    <location>
        <position position="52"/>
    </location>
    <ligand>
        <name>NADP(+)</name>
        <dbReference type="ChEBI" id="CHEBI:58349"/>
    </ligand>
</feature>
<feature type="binding site" evidence="1">
    <location>
        <position position="133"/>
    </location>
    <ligand>
        <name>NADP(+)</name>
        <dbReference type="ChEBI" id="CHEBI:58349"/>
    </ligand>
</feature>
<feature type="binding site" evidence="1">
    <location>
        <position position="190"/>
    </location>
    <ligand>
        <name>Mg(2+)</name>
        <dbReference type="ChEBI" id="CHEBI:18420"/>
        <label>1</label>
    </ligand>
</feature>
<feature type="binding site" evidence="1">
    <location>
        <position position="190"/>
    </location>
    <ligand>
        <name>Mg(2+)</name>
        <dbReference type="ChEBI" id="CHEBI:18420"/>
        <label>2</label>
    </ligand>
</feature>
<feature type="binding site" evidence="1">
    <location>
        <position position="194"/>
    </location>
    <ligand>
        <name>Mg(2+)</name>
        <dbReference type="ChEBI" id="CHEBI:18420"/>
        <label>1</label>
    </ligand>
</feature>
<feature type="binding site" evidence="1">
    <location>
        <position position="226"/>
    </location>
    <ligand>
        <name>Mg(2+)</name>
        <dbReference type="ChEBI" id="CHEBI:18420"/>
        <label>2</label>
    </ligand>
</feature>
<feature type="binding site" evidence="1">
    <location>
        <position position="230"/>
    </location>
    <ligand>
        <name>Mg(2+)</name>
        <dbReference type="ChEBI" id="CHEBI:18420"/>
        <label>2</label>
    </ligand>
</feature>
<feature type="binding site" evidence="1">
    <location>
        <position position="251"/>
    </location>
    <ligand>
        <name>substrate</name>
    </ligand>
</feature>
<protein>
    <recommendedName>
        <fullName evidence="1">Ketol-acid reductoisomerase (NADP(+))</fullName>
        <shortName evidence="1">KARI</shortName>
        <ecNumber evidence="1">1.1.1.86</ecNumber>
    </recommendedName>
    <alternativeName>
        <fullName evidence="1">Acetohydroxy-acid isomeroreductase</fullName>
        <shortName evidence="1">AHIR</shortName>
    </alternativeName>
    <alternativeName>
        <fullName evidence="1">Alpha-keto-beta-hydroxylacyl reductoisomerase</fullName>
    </alternativeName>
    <alternativeName>
        <fullName evidence="1">Ketol-acid reductoisomerase type 1</fullName>
    </alternativeName>
    <alternativeName>
        <fullName evidence="1">Ketol-acid reductoisomerase type I</fullName>
    </alternativeName>
</protein>
<keyword id="KW-0028">Amino-acid biosynthesis</keyword>
<keyword id="KW-0100">Branched-chain amino acid biosynthesis</keyword>
<keyword id="KW-0460">Magnesium</keyword>
<keyword id="KW-0479">Metal-binding</keyword>
<keyword id="KW-0521">NADP</keyword>
<keyword id="KW-0560">Oxidoreductase</keyword>
<keyword id="KW-1185">Reference proteome</keyword>
<reference key="1">
    <citation type="journal article" date="2004" name="Proc. Natl. Acad. Sci. U.S.A.">
        <title>Genomic plasticity of the causative agent of melioidosis, Burkholderia pseudomallei.</title>
        <authorList>
            <person name="Holden M.T.G."/>
            <person name="Titball R.W."/>
            <person name="Peacock S.J."/>
            <person name="Cerdeno-Tarraga A.-M."/>
            <person name="Atkins T."/>
            <person name="Crossman L.C."/>
            <person name="Pitt T."/>
            <person name="Churcher C."/>
            <person name="Mungall K.L."/>
            <person name="Bentley S.D."/>
            <person name="Sebaihia M."/>
            <person name="Thomson N.R."/>
            <person name="Bason N."/>
            <person name="Beacham I.R."/>
            <person name="Brooks K."/>
            <person name="Brown K.A."/>
            <person name="Brown N.F."/>
            <person name="Challis G.L."/>
            <person name="Cherevach I."/>
            <person name="Chillingworth T."/>
            <person name="Cronin A."/>
            <person name="Crossett B."/>
            <person name="Davis P."/>
            <person name="DeShazer D."/>
            <person name="Feltwell T."/>
            <person name="Fraser A."/>
            <person name="Hance Z."/>
            <person name="Hauser H."/>
            <person name="Holroyd S."/>
            <person name="Jagels K."/>
            <person name="Keith K.E."/>
            <person name="Maddison M."/>
            <person name="Moule S."/>
            <person name="Price C."/>
            <person name="Quail M.A."/>
            <person name="Rabbinowitsch E."/>
            <person name="Rutherford K."/>
            <person name="Sanders M."/>
            <person name="Simmonds M."/>
            <person name="Songsivilai S."/>
            <person name="Stevens K."/>
            <person name="Tumapa S."/>
            <person name="Vesaratchavest M."/>
            <person name="Whitehead S."/>
            <person name="Yeats C."/>
            <person name="Barrell B.G."/>
            <person name="Oyston P.C.F."/>
            <person name="Parkhill J."/>
        </authorList>
    </citation>
    <scope>NUCLEOTIDE SEQUENCE [LARGE SCALE GENOMIC DNA]</scope>
    <source>
        <strain>K96243</strain>
    </source>
</reference>